<evidence type="ECO:0000250" key="1"/>
<evidence type="ECO:0000250" key="2">
    <source>
        <dbReference type="UniProtKB" id="A9JLI2"/>
    </source>
</evidence>
<evidence type="ECO:0000250" key="3">
    <source>
        <dbReference type="UniProtKB" id="P18560"/>
    </source>
</evidence>
<evidence type="ECO:0000255" key="4"/>
<evidence type="ECO:0000305" key="5"/>
<proteinExistence type="inferred from homology"/>
<reference key="1">
    <citation type="submission" date="2003-03" db="EMBL/GenBank/DDBJ databases">
        <title>African swine fever virus genomes.</title>
        <authorList>
            <person name="Kutish G.F."/>
            <person name="Rock D.L."/>
        </authorList>
    </citation>
    <scope>NUCLEOTIDE SEQUENCE [LARGE SCALE GENOMIC DNA]</scope>
</reference>
<sequence length="270" mass="32635">MLGLQIITLLFIPTLLYAYELEPLERTETPLEKELGYWCTYANHCSFCWDCQDGICRNKAFKNHSPILENDYIANCSVYRRNDFCIYYITSIKPHKIYRTECSEHLSHEWHEAVIRKWQKLLTYGFYLVGCVLVVNYIRKRSLQTIVYLLVLLVIFFLLSQLMLYRELEDKKHKTGSIPPERELEHWCTHGKYCNFCWDCQNGICRNKVFKNHPPIGENDFIRYDCWTTHLLNKCYYEKIYKHFNTHIMECSQPTHFKWYDNLMKKQDIM</sequence>
<feature type="signal peptide" evidence="2">
    <location>
        <begin position="1"/>
        <end position="26"/>
    </location>
</feature>
<feature type="chain" id="PRO_0000373184" description="Protein MGF 110-1L">
    <location>
        <begin position="27"/>
        <end position="270"/>
    </location>
</feature>
<feature type="transmembrane region" description="Helical" evidence="4">
    <location>
        <begin position="118"/>
        <end position="138"/>
    </location>
</feature>
<feature type="transmembrane region" description="Helical" evidence="4">
    <location>
        <begin position="146"/>
        <end position="166"/>
    </location>
</feature>
<feature type="repeat" description="A">
    <location>
        <begin position="1"/>
        <end position="146"/>
    </location>
</feature>
<feature type="repeat" description="B">
    <location>
        <begin position="147"/>
        <end position="270"/>
    </location>
</feature>
<feature type="glycosylation site" description="N-linked (GlcNAc...) asparagine; by host" evidence="4">
    <location>
        <position position="75"/>
    </location>
</feature>
<comment type="function">
    <text evidence="1">Plays a role in virus cell tropism, and may be required for efficient virus replication in macrophages.</text>
</comment>
<comment type="subcellular location">
    <subcellularLocation>
        <location evidence="3">Membrane</location>
        <topology evidence="3">Multi-pass membrane protein</topology>
    </subcellularLocation>
</comment>
<comment type="induction">
    <text evidence="5">Expressed in the immediate early phase of the viral replicative cycle.</text>
</comment>
<comment type="similarity">
    <text evidence="5">Belongs to the asfivirus MGF 110 family.</text>
</comment>
<dbReference type="EMBL" id="AY261360">
    <property type="status" value="NOT_ANNOTATED_CDS"/>
    <property type="molecule type" value="Genomic_DNA"/>
</dbReference>
<dbReference type="Proteomes" id="UP000000861">
    <property type="component" value="Segment"/>
</dbReference>
<dbReference type="GO" id="GO:0016020">
    <property type="term" value="C:membrane"/>
    <property type="evidence" value="ECO:0007669"/>
    <property type="project" value="UniProtKB-SubCell"/>
</dbReference>
<dbReference type="InterPro" id="IPR004848">
    <property type="entry name" value="ASFV_fam_110"/>
</dbReference>
<dbReference type="Pfam" id="PF01639">
    <property type="entry name" value="v110"/>
    <property type="match status" value="2"/>
</dbReference>
<gene>
    <name type="ordered locus">Ken-007</name>
</gene>
<protein>
    <recommendedName>
        <fullName>Protein MGF 110-1L</fullName>
    </recommendedName>
</protein>
<accession>P0C9G2</accession>
<organismHost>
    <name type="scientific">Ornithodoros</name>
    <name type="common">relapsing fever ticks</name>
    <dbReference type="NCBI Taxonomy" id="6937"/>
</organismHost>
<organismHost>
    <name type="scientific">Phacochoerus aethiopicus</name>
    <name type="common">Warthog</name>
    <dbReference type="NCBI Taxonomy" id="85517"/>
</organismHost>
<organismHost>
    <name type="scientific">Phacochoerus africanus</name>
    <name type="common">Warthog</name>
    <dbReference type="NCBI Taxonomy" id="41426"/>
</organismHost>
<organismHost>
    <name type="scientific">Potamochoerus larvatus</name>
    <name type="common">Bushpig</name>
    <dbReference type="NCBI Taxonomy" id="273792"/>
</organismHost>
<organismHost>
    <name type="scientific">Sus scrofa</name>
    <name type="common">Pig</name>
    <dbReference type="NCBI Taxonomy" id="9823"/>
</organismHost>
<name>1101L_ASFK5</name>
<keyword id="KW-0244">Early protein</keyword>
<keyword id="KW-0325">Glycoprotein</keyword>
<keyword id="KW-0472">Membrane</keyword>
<keyword id="KW-0677">Repeat</keyword>
<keyword id="KW-0732">Signal</keyword>
<keyword id="KW-0812">Transmembrane</keyword>
<keyword id="KW-1133">Transmembrane helix</keyword>
<organism>
    <name type="scientific">African swine fever virus (isolate Pig/Kenya/KEN-50/1950)</name>
    <name type="common">ASFV</name>
    <dbReference type="NCBI Taxonomy" id="561445"/>
    <lineage>
        <taxon>Viruses</taxon>
        <taxon>Varidnaviria</taxon>
        <taxon>Bamfordvirae</taxon>
        <taxon>Nucleocytoviricota</taxon>
        <taxon>Pokkesviricetes</taxon>
        <taxon>Asfuvirales</taxon>
        <taxon>Asfarviridae</taxon>
        <taxon>Asfivirus</taxon>
        <taxon>African swine fever virus</taxon>
    </lineage>
</organism>